<keyword id="KW-0342">GTP-binding</keyword>
<keyword id="KW-0378">Hydrolase</keyword>
<keyword id="KW-0479">Metal-binding</keyword>
<keyword id="KW-0547">Nucleotide-binding</keyword>
<keyword id="KW-0554">One-carbon metabolism</keyword>
<keyword id="KW-0862">Zinc</keyword>
<proteinExistence type="inferred from homology"/>
<accession>C4K3L4</accession>
<gene>
    <name evidence="1" type="primary">folE</name>
    <name type="ordered locus">HDEF_0402</name>
</gene>
<sequence>MSSFSKEARQVHEALVKHGLENPFNMDPENGLLDAATRRSHIEKHITQIMELLNLDLRDDSLSKTPSRIASMYVDEIFLGLDYAHFPEITLIQNKMQVDEMITVHDISLSSTCEHHFASIDGKATVAYIPKDYIIGLSKINRVVQFFSQRPQVQERLTQQIILALQTLLATENVAVSIDATHYCVKARGICDRSSVTRTTSLRGLFKSSQNTRQEFLHIC</sequence>
<comment type="catalytic activity">
    <reaction evidence="1">
        <text>GTP + H2O = 7,8-dihydroneopterin 3'-triphosphate + formate + H(+)</text>
        <dbReference type="Rhea" id="RHEA:17473"/>
        <dbReference type="ChEBI" id="CHEBI:15377"/>
        <dbReference type="ChEBI" id="CHEBI:15378"/>
        <dbReference type="ChEBI" id="CHEBI:15740"/>
        <dbReference type="ChEBI" id="CHEBI:37565"/>
        <dbReference type="ChEBI" id="CHEBI:58462"/>
        <dbReference type="EC" id="3.5.4.16"/>
    </reaction>
</comment>
<comment type="pathway">
    <text evidence="1">Cofactor biosynthesis; 7,8-dihydroneopterin triphosphate biosynthesis; 7,8-dihydroneopterin triphosphate from GTP: step 1/1.</text>
</comment>
<comment type="subunit">
    <text evidence="1">Homomer.</text>
</comment>
<comment type="similarity">
    <text evidence="1">Belongs to the GTP cyclohydrolase I family.</text>
</comment>
<protein>
    <recommendedName>
        <fullName evidence="1">GTP cyclohydrolase 1</fullName>
        <ecNumber evidence="1">3.5.4.16</ecNumber>
    </recommendedName>
    <alternativeName>
        <fullName evidence="1">GTP cyclohydrolase I</fullName>
        <shortName evidence="1">GTP-CH-I</shortName>
    </alternativeName>
</protein>
<organism>
    <name type="scientific">Hamiltonella defensa subsp. Acyrthosiphon pisum (strain 5AT)</name>
    <dbReference type="NCBI Taxonomy" id="572265"/>
    <lineage>
        <taxon>Bacteria</taxon>
        <taxon>Pseudomonadati</taxon>
        <taxon>Pseudomonadota</taxon>
        <taxon>Gammaproteobacteria</taxon>
        <taxon>Enterobacterales</taxon>
        <taxon>Enterobacteriaceae</taxon>
        <taxon>aphid secondary symbionts</taxon>
        <taxon>Candidatus Hamiltonella</taxon>
    </lineage>
</organism>
<feature type="chain" id="PRO_1000204289" description="GTP cyclohydrolase 1">
    <location>
        <begin position="1"/>
        <end position="220"/>
    </location>
</feature>
<feature type="binding site" evidence="1">
    <location>
        <position position="113"/>
    </location>
    <ligand>
        <name>Zn(2+)</name>
        <dbReference type="ChEBI" id="CHEBI:29105"/>
    </ligand>
</feature>
<feature type="binding site" evidence="1">
    <location>
        <position position="116"/>
    </location>
    <ligand>
        <name>Zn(2+)</name>
        <dbReference type="ChEBI" id="CHEBI:29105"/>
    </ligand>
</feature>
<feature type="binding site" evidence="1">
    <location>
        <position position="184"/>
    </location>
    <ligand>
        <name>Zn(2+)</name>
        <dbReference type="ChEBI" id="CHEBI:29105"/>
    </ligand>
</feature>
<dbReference type="EC" id="3.5.4.16" evidence="1"/>
<dbReference type="EMBL" id="CP001277">
    <property type="protein sequence ID" value="ACQ67157.1"/>
    <property type="molecule type" value="Genomic_DNA"/>
</dbReference>
<dbReference type="RefSeq" id="WP_012738117.1">
    <property type="nucleotide sequence ID" value="NC_012751.1"/>
</dbReference>
<dbReference type="SMR" id="C4K3L4"/>
<dbReference type="STRING" id="572265.HDEF_0402"/>
<dbReference type="GeneID" id="66260302"/>
<dbReference type="KEGG" id="hde:HDEF_0402"/>
<dbReference type="eggNOG" id="COG0302">
    <property type="taxonomic scope" value="Bacteria"/>
</dbReference>
<dbReference type="HOGENOM" id="CLU_049768_3_2_6"/>
<dbReference type="UniPathway" id="UPA00848">
    <property type="reaction ID" value="UER00151"/>
</dbReference>
<dbReference type="Proteomes" id="UP000002334">
    <property type="component" value="Chromosome"/>
</dbReference>
<dbReference type="GO" id="GO:0005737">
    <property type="term" value="C:cytoplasm"/>
    <property type="evidence" value="ECO:0007669"/>
    <property type="project" value="TreeGrafter"/>
</dbReference>
<dbReference type="GO" id="GO:0005525">
    <property type="term" value="F:GTP binding"/>
    <property type="evidence" value="ECO:0007669"/>
    <property type="project" value="UniProtKB-KW"/>
</dbReference>
<dbReference type="GO" id="GO:0003934">
    <property type="term" value="F:GTP cyclohydrolase I activity"/>
    <property type="evidence" value="ECO:0007669"/>
    <property type="project" value="UniProtKB-UniRule"/>
</dbReference>
<dbReference type="GO" id="GO:0008270">
    <property type="term" value="F:zinc ion binding"/>
    <property type="evidence" value="ECO:0007669"/>
    <property type="project" value="UniProtKB-UniRule"/>
</dbReference>
<dbReference type="GO" id="GO:0006730">
    <property type="term" value="P:one-carbon metabolic process"/>
    <property type="evidence" value="ECO:0007669"/>
    <property type="project" value="UniProtKB-UniRule"/>
</dbReference>
<dbReference type="GO" id="GO:0006729">
    <property type="term" value="P:tetrahydrobiopterin biosynthetic process"/>
    <property type="evidence" value="ECO:0007669"/>
    <property type="project" value="TreeGrafter"/>
</dbReference>
<dbReference type="GO" id="GO:0046654">
    <property type="term" value="P:tetrahydrofolate biosynthetic process"/>
    <property type="evidence" value="ECO:0007669"/>
    <property type="project" value="UniProtKB-UniRule"/>
</dbReference>
<dbReference type="FunFam" id="3.30.1130.10:FF:000001">
    <property type="entry name" value="GTP cyclohydrolase 1"/>
    <property type="match status" value="1"/>
</dbReference>
<dbReference type="Gene3D" id="1.10.286.10">
    <property type="match status" value="1"/>
</dbReference>
<dbReference type="Gene3D" id="3.30.1130.10">
    <property type="match status" value="1"/>
</dbReference>
<dbReference type="HAMAP" id="MF_00223">
    <property type="entry name" value="FolE"/>
    <property type="match status" value="1"/>
</dbReference>
<dbReference type="InterPro" id="IPR043133">
    <property type="entry name" value="GTP-CH-I_C/QueF"/>
</dbReference>
<dbReference type="InterPro" id="IPR043134">
    <property type="entry name" value="GTP-CH-I_N"/>
</dbReference>
<dbReference type="InterPro" id="IPR001474">
    <property type="entry name" value="GTP_CycHdrlase_I"/>
</dbReference>
<dbReference type="InterPro" id="IPR018234">
    <property type="entry name" value="GTP_CycHdrlase_I_CS"/>
</dbReference>
<dbReference type="InterPro" id="IPR020602">
    <property type="entry name" value="GTP_CycHdrlase_I_dom"/>
</dbReference>
<dbReference type="NCBIfam" id="TIGR00063">
    <property type="entry name" value="folE"/>
    <property type="match status" value="1"/>
</dbReference>
<dbReference type="NCBIfam" id="NF006824">
    <property type="entry name" value="PRK09347.1-1"/>
    <property type="match status" value="1"/>
</dbReference>
<dbReference type="NCBIfam" id="NF006826">
    <property type="entry name" value="PRK09347.1-3"/>
    <property type="match status" value="1"/>
</dbReference>
<dbReference type="PANTHER" id="PTHR11109:SF7">
    <property type="entry name" value="GTP CYCLOHYDROLASE 1"/>
    <property type="match status" value="1"/>
</dbReference>
<dbReference type="PANTHER" id="PTHR11109">
    <property type="entry name" value="GTP CYCLOHYDROLASE I"/>
    <property type="match status" value="1"/>
</dbReference>
<dbReference type="Pfam" id="PF01227">
    <property type="entry name" value="GTP_cyclohydroI"/>
    <property type="match status" value="1"/>
</dbReference>
<dbReference type="SUPFAM" id="SSF55620">
    <property type="entry name" value="Tetrahydrobiopterin biosynthesis enzymes-like"/>
    <property type="match status" value="1"/>
</dbReference>
<dbReference type="PROSITE" id="PS00860">
    <property type="entry name" value="GTP_CYCLOHYDROL_1_2"/>
    <property type="match status" value="1"/>
</dbReference>
<reference key="1">
    <citation type="journal article" date="2009" name="Proc. Natl. Acad. Sci. U.S.A.">
        <title>Hamiltonella defensa, genome evolution of protective bacterial endosymbiont from pathogenic ancestors.</title>
        <authorList>
            <person name="Degnan P.H."/>
            <person name="Yu Y."/>
            <person name="Sisneros N."/>
            <person name="Wing R.A."/>
            <person name="Moran N.A."/>
        </authorList>
    </citation>
    <scope>NUCLEOTIDE SEQUENCE [LARGE SCALE GENOMIC DNA]</scope>
    <source>
        <strain>5AT</strain>
    </source>
</reference>
<name>GCH1_HAMD5</name>
<evidence type="ECO:0000255" key="1">
    <source>
        <dbReference type="HAMAP-Rule" id="MF_00223"/>
    </source>
</evidence>